<organism>
    <name type="scientific">Wolinella succinogenes (strain ATCC 29543 / DSM 1740 / CCUG 13145 / JCM 31913 / LMG 7466 / NCTC 11488 / FDC 602W)</name>
    <name type="common">Vibrio succinogenes</name>
    <dbReference type="NCBI Taxonomy" id="273121"/>
    <lineage>
        <taxon>Bacteria</taxon>
        <taxon>Pseudomonadati</taxon>
        <taxon>Campylobacterota</taxon>
        <taxon>Epsilonproteobacteria</taxon>
        <taxon>Campylobacterales</taxon>
        <taxon>Helicobacteraceae</taxon>
        <taxon>Wolinella</taxon>
    </lineage>
</organism>
<comment type="function">
    <text evidence="1">This protein is one of the early assembly proteins of the 50S ribosomal subunit, although it is not seen to bind rRNA by itself. It is important during the early stages of 50S assembly.</text>
</comment>
<comment type="subunit">
    <text evidence="1">Part of the 50S ribosomal subunit.</text>
</comment>
<comment type="similarity">
    <text evidence="1">Belongs to the universal ribosomal protein uL13 family.</text>
</comment>
<dbReference type="EMBL" id="BX571662">
    <property type="protein sequence ID" value="CAE11133.1"/>
    <property type="molecule type" value="Genomic_DNA"/>
</dbReference>
<dbReference type="SMR" id="Q7M7R0"/>
<dbReference type="STRING" id="273121.WS2138"/>
<dbReference type="KEGG" id="wsu:WS2138"/>
<dbReference type="eggNOG" id="COG0102">
    <property type="taxonomic scope" value="Bacteria"/>
</dbReference>
<dbReference type="HOGENOM" id="CLU_082184_2_2_7"/>
<dbReference type="Proteomes" id="UP000000422">
    <property type="component" value="Chromosome"/>
</dbReference>
<dbReference type="GO" id="GO:0022625">
    <property type="term" value="C:cytosolic large ribosomal subunit"/>
    <property type="evidence" value="ECO:0007669"/>
    <property type="project" value="TreeGrafter"/>
</dbReference>
<dbReference type="GO" id="GO:0003729">
    <property type="term" value="F:mRNA binding"/>
    <property type="evidence" value="ECO:0007669"/>
    <property type="project" value="TreeGrafter"/>
</dbReference>
<dbReference type="GO" id="GO:0003735">
    <property type="term" value="F:structural constituent of ribosome"/>
    <property type="evidence" value="ECO:0007669"/>
    <property type="project" value="InterPro"/>
</dbReference>
<dbReference type="GO" id="GO:0017148">
    <property type="term" value="P:negative regulation of translation"/>
    <property type="evidence" value="ECO:0007669"/>
    <property type="project" value="TreeGrafter"/>
</dbReference>
<dbReference type="GO" id="GO:0006412">
    <property type="term" value="P:translation"/>
    <property type="evidence" value="ECO:0007669"/>
    <property type="project" value="UniProtKB-UniRule"/>
</dbReference>
<dbReference type="CDD" id="cd00392">
    <property type="entry name" value="Ribosomal_L13"/>
    <property type="match status" value="1"/>
</dbReference>
<dbReference type="Gene3D" id="3.90.1180.10">
    <property type="entry name" value="Ribosomal protein L13"/>
    <property type="match status" value="1"/>
</dbReference>
<dbReference type="HAMAP" id="MF_01366">
    <property type="entry name" value="Ribosomal_uL13"/>
    <property type="match status" value="1"/>
</dbReference>
<dbReference type="InterPro" id="IPR005822">
    <property type="entry name" value="Ribosomal_uL13"/>
</dbReference>
<dbReference type="InterPro" id="IPR005823">
    <property type="entry name" value="Ribosomal_uL13_bac-type"/>
</dbReference>
<dbReference type="InterPro" id="IPR036899">
    <property type="entry name" value="Ribosomal_uL13_sf"/>
</dbReference>
<dbReference type="NCBIfam" id="TIGR01066">
    <property type="entry name" value="rplM_bact"/>
    <property type="match status" value="1"/>
</dbReference>
<dbReference type="PANTHER" id="PTHR11545:SF2">
    <property type="entry name" value="LARGE RIBOSOMAL SUBUNIT PROTEIN UL13M"/>
    <property type="match status" value="1"/>
</dbReference>
<dbReference type="PANTHER" id="PTHR11545">
    <property type="entry name" value="RIBOSOMAL PROTEIN L13"/>
    <property type="match status" value="1"/>
</dbReference>
<dbReference type="Pfam" id="PF00572">
    <property type="entry name" value="Ribosomal_L13"/>
    <property type="match status" value="1"/>
</dbReference>
<dbReference type="PIRSF" id="PIRSF002181">
    <property type="entry name" value="Ribosomal_L13"/>
    <property type="match status" value="1"/>
</dbReference>
<dbReference type="SUPFAM" id="SSF52161">
    <property type="entry name" value="Ribosomal protein L13"/>
    <property type="match status" value="1"/>
</dbReference>
<evidence type="ECO:0000255" key="1">
    <source>
        <dbReference type="HAMAP-Rule" id="MF_01366"/>
    </source>
</evidence>
<evidence type="ECO:0000305" key="2"/>
<proteinExistence type="inferred from homology"/>
<keyword id="KW-1185">Reference proteome</keyword>
<keyword id="KW-0687">Ribonucleoprotein</keyword>
<keyword id="KW-0689">Ribosomal protein</keyword>
<sequence>MNMTKMAKANEIKREWVVLDAEGKTFGRLMTQVATLLRGKHRPDYTPHVDCGDFVVIVNASKVVFSGLKLEAKEYFTHSGYFGSTKSQTLQELLEKNPEKLFRLAARGMLPKTKLGRAMLKKLKVYAGAEHPHTAQVTK</sequence>
<gene>
    <name evidence="1" type="primary">rplM</name>
    <name type="ordered locus">WS2138</name>
</gene>
<protein>
    <recommendedName>
        <fullName evidence="1">Large ribosomal subunit protein uL13</fullName>
    </recommendedName>
    <alternativeName>
        <fullName evidence="2">50S ribosomal protein L13</fullName>
    </alternativeName>
</protein>
<feature type="chain" id="PRO_0000261825" description="Large ribosomal subunit protein uL13">
    <location>
        <begin position="1"/>
        <end position="139"/>
    </location>
</feature>
<accession>Q7M7R0</accession>
<name>RL13_WOLSU</name>
<reference key="1">
    <citation type="journal article" date="2003" name="Proc. Natl. Acad. Sci. U.S.A.">
        <title>Complete genome sequence and analysis of Wolinella succinogenes.</title>
        <authorList>
            <person name="Baar C."/>
            <person name="Eppinger M."/>
            <person name="Raddatz G."/>
            <person name="Simon J."/>
            <person name="Lanz C."/>
            <person name="Klimmek O."/>
            <person name="Nandakumar R."/>
            <person name="Gross R."/>
            <person name="Rosinus A."/>
            <person name="Keller H."/>
            <person name="Jagtap P."/>
            <person name="Linke B."/>
            <person name="Meyer F."/>
            <person name="Lederer H."/>
            <person name="Schuster S.C."/>
        </authorList>
    </citation>
    <scope>NUCLEOTIDE SEQUENCE [LARGE SCALE GENOMIC DNA]</scope>
    <source>
        <strain>ATCC 29543 / DSM 1740 / CCUG 13145 / JCM 31913 / LMG 7466 / NCTC 11488 / FDC 602W</strain>
    </source>
</reference>